<name>RFA1_PONAB</name>
<evidence type="ECO:0000250" key="1">
    <source>
        <dbReference type="UniProtKB" id="P27694"/>
    </source>
</evidence>
<evidence type="ECO:0000250" key="2">
    <source>
        <dbReference type="UniProtKB" id="Q8VEE4"/>
    </source>
</evidence>
<evidence type="ECO:0000255" key="3"/>
<evidence type="ECO:0000256" key="4">
    <source>
        <dbReference type="SAM" id="MobiDB-lite"/>
    </source>
</evidence>
<evidence type="ECO:0000305" key="5"/>
<keyword id="KW-0007">Acetylation</keyword>
<keyword id="KW-0013">ADP-ribosylation</keyword>
<keyword id="KW-0227">DNA damage</keyword>
<keyword id="KW-0233">DNA recombination</keyword>
<keyword id="KW-0234">DNA repair</keyword>
<keyword id="KW-0235">DNA replication</keyword>
<keyword id="KW-0238">DNA-binding</keyword>
<keyword id="KW-1017">Isopeptide bond</keyword>
<keyword id="KW-0479">Metal-binding</keyword>
<keyword id="KW-0539">Nucleus</keyword>
<keyword id="KW-0597">Phosphoprotein</keyword>
<keyword id="KW-1185">Reference proteome</keyword>
<keyword id="KW-0832">Ubl conjugation</keyword>
<keyword id="KW-0862">Zinc</keyword>
<keyword id="KW-0863">Zinc-finger</keyword>
<organism>
    <name type="scientific">Pongo abelii</name>
    <name type="common">Sumatran orangutan</name>
    <name type="synonym">Pongo pygmaeus abelii</name>
    <dbReference type="NCBI Taxonomy" id="9601"/>
    <lineage>
        <taxon>Eukaryota</taxon>
        <taxon>Metazoa</taxon>
        <taxon>Chordata</taxon>
        <taxon>Craniata</taxon>
        <taxon>Vertebrata</taxon>
        <taxon>Euteleostomi</taxon>
        <taxon>Mammalia</taxon>
        <taxon>Eutheria</taxon>
        <taxon>Euarchontoglires</taxon>
        <taxon>Primates</taxon>
        <taxon>Haplorrhini</taxon>
        <taxon>Catarrhini</taxon>
        <taxon>Hominidae</taxon>
        <taxon>Pongo</taxon>
    </lineage>
</organism>
<gene>
    <name type="primary">RPA1</name>
</gene>
<dbReference type="EMBL" id="CR860058">
    <property type="protein sequence ID" value="CAH92206.1"/>
    <property type="molecule type" value="mRNA"/>
</dbReference>
<dbReference type="RefSeq" id="NP_001126290.1">
    <property type="nucleotide sequence ID" value="NM_001132818.1"/>
</dbReference>
<dbReference type="BMRB" id="Q5R7Q4"/>
<dbReference type="SMR" id="Q5R7Q4"/>
<dbReference type="FunCoup" id="Q5R7Q4">
    <property type="interactions" value="3150"/>
</dbReference>
<dbReference type="GeneID" id="100173266"/>
<dbReference type="KEGG" id="pon:100173266"/>
<dbReference type="CTD" id="6117"/>
<dbReference type="InParanoid" id="Q5R7Q4"/>
<dbReference type="OrthoDB" id="1751331at2759"/>
<dbReference type="Proteomes" id="UP000001595">
    <property type="component" value="Unplaced"/>
</dbReference>
<dbReference type="GO" id="GO:0005662">
    <property type="term" value="C:DNA replication factor A complex"/>
    <property type="evidence" value="ECO:0000250"/>
    <property type="project" value="UniProtKB"/>
</dbReference>
<dbReference type="GO" id="GO:0005634">
    <property type="term" value="C:nucleus"/>
    <property type="evidence" value="ECO:0000250"/>
    <property type="project" value="UniProtKB"/>
</dbReference>
<dbReference type="GO" id="GO:0016605">
    <property type="term" value="C:PML body"/>
    <property type="evidence" value="ECO:0007669"/>
    <property type="project" value="UniProtKB-SubCell"/>
</dbReference>
<dbReference type="GO" id="GO:0090734">
    <property type="term" value="C:site of DNA damage"/>
    <property type="evidence" value="ECO:0000250"/>
    <property type="project" value="UniProtKB"/>
</dbReference>
<dbReference type="GO" id="GO:0003684">
    <property type="term" value="F:damaged DNA binding"/>
    <property type="evidence" value="ECO:0000250"/>
    <property type="project" value="UniProtKB"/>
</dbReference>
<dbReference type="GO" id="GO:0003697">
    <property type="term" value="F:single-stranded DNA binding"/>
    <property type="evidence" value="ECO:0000250"/>
    <property type="project" value="UniProtKB"/>
</dbReference>
<dbReference type="GO" id="GO:0008270">
    <property type="term" value="F:zinc ion binding"/>
    <property type="evidence" value="ECO:0007669"/>
    <property type="project" value="UniProtKB-KW"/>
</dbReference>
<dbReference type="GO" id="GO:0006284">
    <property type="term" value="P:base-excision repair"/>
    <property type="evidence" value="ECO:0000250"/>
    <property type="project" value="UniProtKB"/>
</dbReference>
<dbReference type="GO" id="GO:0006974">
    <property type="term" value="P:DNA damage response"/>
    <property type="evidence" value="ECO:0000250"/>
    <property type="project" value="UniProtKB"/>
</dbReference>
<dbReference type="GO" id="GO:0006260">
    <property type="term" value="P:DNA replication"/>
    <property type="evidence" value="ECO:0000250"/>
    <property type="project" value="UniProtKB"/>
</dbReference>
<dbReference type="GO" id="GO:0000724">
    <property type="term" value="P:double-strand break repair via homologous recombination"/>
    <property type="evidence" value="ECO:0000250"/>
    <property type="project" value="UniProtKB"/>
</dbReference>
<dbReference type="GO" id="GO:0006298">
    <property type="term" value="P:mismatch repair"/>
    <property type="evidence" value="ECO:0000250"/>
    <property type="project" value="UniProtKB"/>
</dbReference>
<dbReference type="GO" id="GO:0006289">
    <property type="term" value="P:nucleotide-excision repair"/>
    <property type="evidence" value="ECO:0000250"/>
    <property type="project" value="UniProtKB"/>
</dbReference>
<dbReference type="GO" id="GO:0034502">
    <property type="term" value="P:protein localization to chromosome"/>
    <property type="evidence" value="ECO:0000250"/>
    <property type="project" value="UniProtKB"/>
</dbReference>
<dbReference type="CDD" id="cd04474">
    <property type="entry name" value="RPA1_DBD_A"/>
    <property type="match status" value="1"/>
</dbReference>
<dbReference type="CDD" id="cd04475">
    <property type="entry name" value="RPA1_DBD_B"/>
    <property type="match status" value="1"/>
</dbReference>
<dbReference type="CDD" id="cd04476">
    <property type="entry name" value="RPA1_DBD_C"/>
    <property type="match status" value="1"/>
</dbReference>
<dbReference type="CDD" id="cd04477">
    <property type="entry name" value="RPA1N"/>
    <property type="match status" value="1"/>
</dbReference>
<dbReference type="FunFam" id="2.40.50.140:FF:000041">
    <property type="entry name" value="Replication protein A subunit"/>
    <property type="match status" value="1"/>
</dbReference>
<dbReference type="FunFam" id="2.40.50.140:FF:000064">
    <property type="entry name" value="Replication protein A subunit"/>
    <property type="match status" value="1"/>
</dbReference>
<dbReference type="FunFam" id="2.40.50.140:FF:000090">
    <property type="entry name" value="Replication protein A subunit"/>
    <property type="match status" value="1"/>
</dbReference>
<dbReference type="FunFam" id="2.40.50.140:FF:000117">
    <property type="entry name" value="Replication protein A subunit"/>
    <property type="match status" value="1"/>
</dbReference>
<dbReference type="Gene3D" id="2.40.50.140">
    <property type="entry name" value="Nucleic acid-binding proteins"/>
    <property type="match status" value="4"/>
</dbReference>
<dbReference type="InterPro" id="IPR047192">
    <property type="entry name" value="Euk_RPA1_DBD_C"/>
</dbReference>
<dbReference type="InterPro" id="IPR012340">
    <property type="entry name" value="NA-bd_OB-fold"/>
</dbReference>
<dbReference type="InterPro" id="IPR004365">
    <property type="entry name" value="NA-bd_OB_tRNA"/>
</dbReference>
<dbReference type="InterPro" id="IPR013955">
    <property type="entry name" value="Rep_factor-A_C"/>
</dbReference>
<dbReference type="InterPro" id="IPR007199">
    <property type="entry name" value="Rep_factor-A_N"/>
</dbReference>
<dbReference type="InterPro" id="IPR031657">
    <property type="entry name" value="REPA_OB_2"/>
</dbReference>
<dbReference type="InterPro" id="IPR004591">
    <property type="entry name" value="Rfa1"/>
</dbReference>
<dbReference type="NCBIfam" id="TIGR00617">
    <property type="entry name" value="rpa1"/>
    <property type="match status" value="1"/>
</dbReference>
<dbReference type="PANTHER" id="PTHR47165">
    <property type="entry name" value="OS03G0429900 PROTEIN"/>
    <property type="match status" value="1"/>
</dbReference>
<dbReference type="PANTHER" id="PTHR47165:SF4">
    <property type="entry name" value="OS03G0429900 PROTEIN"/>
    <property type="match status" value="1"/>
</dbReference>
<dbReference type="Pfam" id="PF04057">
    <property type="entry name" value="Rep-A_N"/>
    <property type="match status" value="1"/>
</dbReference>
<dbReference type="Pfam" id="PF08646">
    <property type="entry name" value="Rep_fac-A_C"/>
    <property type="match status" value="1"/>
</dbReference>
<dbReference type="Pfam" id="PF16900">
    <property type="entry name" value="REPA_OB_2"/>
    <property type="match status" value="1"/>
</dbReference>
<dbReference type="Pfam" id="PF01336">
    <property type="entry name" value="tRNA_anti-codon"/>
    <property type="match status" value="1"/>
</dbReference>
<dbReference type="SUPFAM" id="SSF50249">
    <property type="entry name" value="Nucleic acid-binding proteins"/>
    <property type="match status" value="4"/>
</dbReference>
<protein>
    <recommendedName>
        <fullName>Replication protein A 70 kDa DNA-binding subunit</fullName>
        <shortName>RP-A p70</shortName>
    </recommendedName>
    <alternativeName>
        <fullName>Replication factor A protein 1</fullName>
        <shortName>RF-A protein 1</shortName>
    </alternativeName>
</protein>
<comment type="function">
    <text evidence="1">As part of the heterotrimeric replication protein A complex (RPA/RP-A), binds and stabilizes single-stranded DNA intermediates, that form during DNA replication or upon DNA stress. It prevents their reannealing and in parallel, recruits and activates different proteins and complexes involved in DNA metabolism. Thereby, it plays an essential role both in DNA replication and the cellular response to DNA damage. In the cellular response to DNA damage, the RPA complex controls DNA repair and DNA damage checkpoint activation. Through recruitment of ATRIP activates the ATR kinase a master regulator of the DNA damage response. It is required for the recruitment of the DNA double-strand break repair factors RAD51 and RAD52 to chromatin in response to DNA damage. Also recruits to sites of DNA damage proteins like XPA and XPG that are involved in nucleotide excision repair and is required for this mechanism of DNA repair. Also plays a role in base excision repair (BER) probably through interaction with UNG. Also recruits SMARCAL1/HARP, which is involved in replication fork restart, to sites of DNA damage. May also play a role in telomere maintenance.</text>
</comment>
<comment type="subunit">
    <text evidence="1 2">Component of the canonical replication protein A complex (RPA), a heterotrimer composed of RPA1, RPA2 and RPA3. The DNA-binding activity may reside exclusively on the RPA1 subunit. Interacts with PRPF19; the PRP19-CDC5L complex is recruited to the sites of DNA repair where it ubiquitinates the replication protein A complex (RPA). Interacts with RIPK1. Interacts with the polymerase alpha subunit POLA1/p180; this interaction stabilizes the replicative complex and reduces the misincorporation rate of DNA polymerase alpha by acting as a fidelity clamp. Interacts with RAD51 and SENP6 to regulate DNA repair. Interacts with HELB; this interaction promotes HELB recruitment to chromatin following DNA damage. Interacts with PRIMPOL; leading to recruit PRIMPOL on chromatin and stimulate its DNA primase activity. Interacts with XPA; the interaction is direct and associates XPA with the RPA complex. Interacts with ETAA1; the interaction is direct and promotes ETAA1 recruitment at stalled replication forks. Interacts with RPA1; this interaction associates HROB with the RPA complex. Interacts (when poly-ADP-ribosylated) with HTATSF1 (By similarity).</text>
</comment>
<comment type="subcellular location">
    <subcellularLocation>
        <location evidence="1">Nucleus</location>
    </subcellularLocation>
    <subcellularLocation>
        <location evidence="1">Nucleus</location>
        <location evidence="1">PML body</location>
    </subcellularLocation>
</comment>
<comment type="PTM">
    <text evidence="1">DNA damage-induced 'Lys-63'-linked polyubiquitination by PRPF19 mediates ATRIP recruitment to the RPA complex at sites of DNA damage and activation of ATR. Ubiquitinated by RFWD3 at stalled replication forks in response to DNA damage: ubiquitination by RFWD3 does not lead to degradation by the proteasome and promotes removal of the RPA complex from stalled replication forks, promoting homologous recombination.</text>
</comment>
<comment type="PTM">
    <text evidence="1">Sumoylated on lysine residues Lys-449 and Lys-577, with Lys-449 being the major site. Sumoylation promotes recruitment of RAD51 to the DNA damage foci to initiate DNA repair through homologous recombination. Desumoylated by SENP6 (By similarity).</text>
</comment>
<comment type="PTM">
    <text evidence="1">Poly-ADP-ribosylated by PARP1; promoting recruitment of HTATSF1.</text>
</comment>
<comment type="similarity">
    <text evidence="5">Belongs to the replication factor A protein 1 family.</text>
</comment>
<feature type="chain" id="PRO_0000097262" description="Replication protein A 70 kDa DNA-binding subunit">
    <location>
        <begin position="1"/>
        <end position="616"/>
    </location>
</feature>
<feature type="DNA-binding region" description="OB">
    <location>
        <begin position="197"/>
        <end position="281"/>
    </location>
</feature>
<feature type="zinc finger region" description="C4-type" evidence="3">
    <location>
        <begin position="481"/>
        <end position="503"/>
    </location>
</feature>
<feature type="region of interest" description="Disordered" evidence="4">
    <location>
        <begin position="121"/>
        <end position="155"/>
    </location>
</feature>
<feature type="compositionally biased region" description="Low complexity" evidence="4">
    <location>
        <begin position="134"/>
        <end position="145"/>
    </location>
</feature>
<feature type="compositionally biased region" description="Polar residues" evidence="4">
    <location>
        <begin position="146"/>
        <end position="155"/>
    </location>
</feature>
<feature type="modified residue" description="N-acetylmethionine" evidence="1">
    <location>
        <position position="1"/>
    </location>
</feature>
<feature type="modified residue" description="N6-acetyllysine; alternate" evidence="1">
    <location>
        <position position="163"/>
    </location>
</feature>
<feature type="modified residue" description="N6-acetyllysine; alternate" evidence="1">
    <location>
        <position position="167"/>
    </location>
</feature>
<feature type="modified residue" description="Phosphothreonine" evidence="1">
    <location>
        <position position="180"/>
    </location>
</feature>
<feature type="modified residue" description="Phosphothreonine" evidence="1">
    <location>
        <position position="191"/>
    </location>
</feature>
<feature type="modified residue" description="N6-acetyllysine; alternate" evidence="1">
    <location>
        <position position="259"/>
    </location>
</feature>
<feature type="modified residue" description="Phosphoserine" evidence="1">
    <location>
        <position position="384"/>
    </location>
</feature>
<feature type="cross-link" description="Glycyl lysine isopeptide (Lys-Gly) (interchain with G-Cter in ubiquitin)" evidence="1">
    <location>
        <position position="22"/>
    </location>
</feature>
<feature type="cross-link" description="Glycyl lysine isopeptide (Lys-Gly) (interchain with G-Cter in ubiquitin)" evidence="1">
    <location>
        <position position="88"/>
    </location>
</feature>
<feature type="cross-link" description="Glycyl lysine isopeptide (Lys-Gly) (interchain with G-Cter in ubiquitin); alternate" evidence="1">
    <location>
        <position position="163"/>
    </location>
</feature>
<feature type="cross-link" description="Glycyl lysine isopeptide (Lys-Gly) (interchain with G-Cter in ubiquitin); alternate" evidence="1">
    <location>
        <position position="167"/>
    </location>
</feature>
<feature type="cross-link" description="Glycyl lysine isopeptide (Lys-Gly) (interchain with G-Cter in ubiquitin)" evidence="1">
    <location>
        <position position="183"/>
    </location>
</feature>
<feature type="cross-link" description="Glycyl lysine isopeptide (Lys-Gly) (interchain with G-Cter in ubiquitin)" evidence="1">
    <location>
        <position position="220"/>
    </location>
</feature>
<feature type="cross-link" description="Glycyl lysine isopeptide (Lys-Gly) (interchain with G-Cter in ubiquitin)" evidence="1">
    <location>
        <position position="244"/>
    </location>
</feature>
<feature type="cross-link" description="Glycyl lysine isopeptide (Lys-Gly) (interchain with G-Cter in ubiquitin); alternate" evidence="1">
    <location>
        <position position="259"/>
    </location>
</feature>
<feature type="cross-link" description="Glycyl lysine isopeptide (Lys-Gly) (interchain with G-Cter in ubiquitin)" evidence="1">
    <location>
        <position position="267"/>
    </location>
</feature>
<feature type="cross-link" description="Glycyl lysine isopeptide (Lys-Gly) (interchain with G-Cter in ubiquitin)" evidence="1">
    <location>
        <position position="331"/>
    </location>
</feature>
<feature type="cross-link" description="Glycyl lysine isopeptide (Lys-Gly) (interchain with G-Cter in ubiquitin)" evidence="1">
    <location>
        <position position="410"/>
    </location>
</feature>
<feature type="cross-link" description="Glycyl lysine isopeptide (Lys-Gly) (interchain with G-Cter in ubiquitin)" evidence="1">
    <location>
        <position position="431"/>
    </location>
</feature>
<feature type="cross-link" description="Glycyl lysine isopeptide (Lys-Gly) (interchain with G-Cter in SUMO)" evidence="1">
    <location>
        <position position="449"/>
    </location>
</feature>
<feature type="cross-link" description="Glycyl lysine isopeptide (Lys-Gly) (interchain with G-Cter in ubiquitin)" evidence="1">
    <location>
        <position position="458"/>
    </location>
</feature>
<feature type="cross-link" description="Glycyl lysine isopeptide (Lys-Gly) (interchain with G-Cter in ubiquitin)" evidence="1">
    <location>
        <position position="553"/>
    </location>
</feature>
<feature type="cross-link" description="Glycyl lysine isopeptide (Lys-Gly) (interchain with G-Cter in SUMO)" evidence="1">
    <location>
        <position position="577"/>
    </location>
</feature>
<reference key="1">
    <citation type="submission" date="2004-11" db="EMBL/GenBank/DDBJ databases">
        <authorList>
            <consortium name="The German cDNA consortium"/>
        </authorList>
    </citation>
    <scope>NUCLEOTIDE SEQUENCE [LARGE SCALE MRNA]</scope>
    <source>
        <tissue>Kidney</tissue>
    </source>
</reference>
<proteinExistence type="evidence at transcript level"/>
<accession>Q5R7Q4</accession>
<sequence length="616" mass="68125">MVGQLSEGAIAAIMQKGDTNIKPILQVINIRPITTGNSPPRYRLLMSDGLNTLSSFMSATQLNPLVEQEQLSSNCVCQINRFIVNTLKDGRRVVILMELEVLKSAEVVGVKIGNPVPYNEGLGQPQVAPPAPAASPAASSRPQPQNGTSGAGSTVSKAYGASKTFGKAAGPSLSHNSGGTQSKVVPIASLTPYQSKWTICARVTNKSQIRTWSNSRGEEKLFSLELVDESGEIRATAFNEQVDKFFPLIEVNKVYYFSKGTLKIANKQFTAVKNDYEMTFNNETSVMPCEDDHHLPTVQFDFTGIDDLENKSKDSLVDIIGICKSYEDATKITVRSNNREVAKRNIYLMDTSGKVVTATLWGEDADKFDGSRQPVLAIKGARVSDFGGRSLSVLSSSTIIANPDIPEAYKLRGWFDAEGQALDGVSISDLKSGGVGGGNTNWKTLYEVKSENLGQGDKPDYFSSVATVVYLRKENCMYQACPTQDCNKKVIDQQNGLYRCEKCDTEFPNFKYRMILSVNIADFQENQWVTCFQESAEAILGQNAAYLGELKDKNEQAFEEVFQNANFRSFIFRVRVKVETYNDESRIKATVMDVKPVDYREYGRRLVMSIRRSALM</sequence>